<sequence>MAWIDPEVTKKPKKPMFLCVLSNTKTAHIPKLSAAGKTAELTDYTPAGDAELIETGNIISVPVLPMTPPYDTPTPAIMTRSALKLTEAPYHFINSGLIVTPEVPCIDLKAKPGEDIREPIAVRDVQGIYERAKFLAKRLRSQIDHVVIGESIPGGTTTAMGVLNALGYNGNVSSSADENPLELKKQVVEEGMKASGLTFGSLKDEPMKAIACMGDPMMPAVIGLVAGFQGTEVDVVLAGGTQMAAVYAIIKHLGFNTEKLAIATTRYVVEDKSAHFVELTKTLEVPVVYIADPGFGKSSLKGLHRYETGTIKEGAGAGGAMYLAGLFGVTQDEFRSEVENVCKLLKAGQ</sequence>
<comment type="similarity">
    <text evidence="1">Belongs to the UPF0284 family.</text>
</comment>
<dbReference type="EMBL" id="AE010299">
    <property type="protein sequence ID" value="AAM07238.1"/>
    <property type="molecule type" value="Genomic_DNA"/>
</dbReference>
<dbReference type="RefSeq" id="WP_011023783.1">
    <property type="nucleotide sequence ID" value="NC_003552.1"/>
</dbReference>
<dbReference type="SMR" id="Q8TJA1"/>
<dbReference type="STRING" id="188937.MA_3887"/>
<dbReference type="EnsemblBacteria" id="AAM07238">
    <property type="protein sequence ID" value="AAM07238"/>
    <property type="gene ID" value="MA_3887"/>
</dbReference>
<dbReference type="GeneID" id="1475780"/>
<dbReference type="KEGG" id="mac:MA_3887"/>
<dbReference type="HOGENOM" id="CLU_053134_0_0_2"/>
<dbReference type="InParanoid" id="Q8TJA1"/>
<dbReference type="OrthoDB" id="9136at2157"/>
<dbReference type="PhylomeDB" id="Q8TJA1"/>
<dbReference type="Proteomes" id="UP000002487">
    <property type="component" value="Chromosome"/>
</dbReference>
<dbReference type="GO" id="GO:0008939">
    <property type="term" value="F:nicotinate-nucleotide-dimethylbenzimidazole phosphoribosyltransferase activity"/>
    <property type="evidence" value="ECO:0007669"/>
    <property type="project" value="InterPro"/>
</dbReference>
<dbReference type="CDD" id="cd02439">
    <property type="entry name" value="DMB-PRT_CobT"/>
    <property type="match status" value="1"/>
</dbReference>
<dbReference type="Gene3D" id="3.40.50.10210">
    <property type="match status" value="1"/>
</dbReference>
<dbReference type="HAMAP" id="MF_01086">
    <property type="entry name" value="UPF0284"/>
    <property type="match status" value="1"/>
</dbReference>
<dbReference type="InterPro" id="IPR003200">
    <property type="entry name" value="Nict_dMeBzImd_PRibTrfase"/>
</dbReference>
<dbReference type="InterPro" id="IPR002805">
    <property type="entry name" value="Nict_dMeBzImd_PRibTrfase_arc"/>
</dbReference>
<dbReference type="InterPro" id="IPR036087">
    <property type="entry name" value="Nict_dMeBzImd_PRibTrfase_sf"/>
</dbReference>
<dbReference type="NCBIfam" id="TIGR00303">
    <property type="entry name" value="nicotinate mononucleotide-dependent phosphoribosyltransferase CobT"/>
    <property type="match status" value="1"/>
</dbReference>
<dbReference type="NCBIfam" id="NF003372">
    <property type="entry name" value="PRK04447.1-5"/>
    <property type="match status" value="1"/>
</dbReference>
<dbReference type="PANTHER" id="PTHR38811">
    <property type="match status" value="1"/>
</dbReference>
<dbReference type="PANTHER" id="PTHR38811:SF1">
    <property type="entry name" value="UPF0284 PROTEIN SLL1500"/>
    <property type="match status" value="1"/>
</dbReference>
<dbReference type="SUPFAM" id="SSF52733">
    <property type="entry name" value="Nicotinate mononucleotide:5,6-dimethylbenzimidazole phosphoribosyltransferase (CobT)"/>
    <property type="match status" value="1"/>
</dbReference>
<protein>
    <recommendedName>
        <fullName evidence="1">UPF0284 protein MA_3887</fullName>
    </recommendedName>
</protein>
<feature type="chain" id="PRO_0000151050" description="UPF0284 protein MA_3887">
    <location>
        <begin position="1"/>
        <end position="349"/>
    </location>
</feature>
<name>Y3887_METAC</name>
<organism>
    <name type="scientific">Methanosarcina acetivorans (strain ATCC 35395 / DSM 2834 / JCM 12185 / C2A)</name>
    <dbReference type="NCBI Taxonomy" id="188937"/>
    <lineage>
        <taxon>Archaea</taxon>
        <taxon>Methanobacteriati</taxon>
        <taxon>Methanobacteriota</taxon>
        <taxon>Stenosarchaea group</taxon>
        <taxon>Methanomicrobia</taxon>
        <taxon>Methanosarcinales</taxon>
        <taxon>Methanosarcinaceae</taxon>
        <taxon>Methanosarcina</taxon>
    </lineage>
</organism>
<keyword id="KW-1185">Reference proteome</keyword>
<gene>
    <name type="ordered locus">MA_3887</name>
</gene>
<accession>Q8TJA1</accession>
<evidence type="ECO:0000255" key="1">
    <source>
        <dbReference type="HAMAP-Rule" id="MF_01086"/>
    </source>
</evidence>
<proteinExistence type="inferred from homology"/>
<reference key="1">
    <citation type="journal article" date="2002" name="Genome Res.">
        <title>The genome of Methanosarcina acetivorans reveals extensive metabolic and physiological diversity.</title>
        <authorList>
            <person name="Galagan J.E."/>
            <person name="Nusbaum C."/>
            <person name="Roy A."/>
            <person name="Endrizzi M.G."/>
            <person name="Macdonald P."/>
            <person name="FitzHugh W."/>
            <person name="Calvo S."/>
            <person name="Engels R."/>
            <person name="Smirnov S."/>
            <person name="Atnoor D."/>
            <person name="Brown A."/>
            <person name="Allen N."/>
            <person name="Naylor J."/>
            <person name="Stange-Thomann N."/>
            <person name="DeArellano K."/>
            <person name="Johnson R."/>
            <person name="Linton L."/>
            <person name="McEwan P."/>
            <person name="McKernan K."/>
            <person name="Talamas J."/>
            <person name="Tirrell A."/>
            <person name="Ye W."/>
            <person name="Zimmer A."/>
            <person name="Barber R.D."/>
            <person name="Cann I."/>
            <person name="Graham D.E."/>
            <person name="Grahame D.A."/>
            <person name="Guss A.M."/>
            <person name="Hedderich R."/>
            <person name="Ingram-Smith C."/>
            <person name="Kuettner H.C."/>
            <person name="Krzycki J.A."/>
            <person name="Leigh J.A."/>
            <person name="Li W."/>
            <person name="Liu J."/>
            <person name="Mukhopadhyay B."/>
            <person name="Reeve J.N."/>
            <person name="Smith K."/>
            <person name="Springer T.A."/>
            <person name="Umayam L.A."/>
            <person name="White O."/>
            <person name="White R.H."/>
            <person name="de Macario E.C."/>
            <person name="Ferry J.G."/>
            <person name="Jarrell K.F."/>
            <person name="Jing H."/>
            <person name="Macario A.J.L."/>
            <person name="Paulsen I.T."/>
            <person name="Pritchett M."/>
            <person name="Sowers K.R."/>
            <person name="Swanson R.V."/>
            <person name="Zinder S.H."/>
            <person name="Lander E."/>
            <person name="Metcalf W.W."/>
            <person name="Birren B."/>
        </authorList>
    </citation>
    <scope>NUCLEOTIDE SEQUENCE [LARGE SCALE GENOMIC DNA]</scope>
    <source>
        <strain>ATCC 35395 / DSM 2834 / JCM 12185 / C2A</strain>
    </source>
</reference>